<evidence type="ECO:0000250" key="1">
    <source>
        <dbReference type="UniProtKB" id="K7IM66"/>
    </source>
</evidence>
<evidence type="ECO:0000255" key="2">
    <source>
        <dbReference type="HAMAP-Rule" id="MF_03003"/>
    </source>
</evidence>
<evidence type="ECO:0000256" key="3">
    <source>
        <dbReference type="SAM" id="MobiDB-lite"/>
    </source>
</evidence>
<sequence length="563" mass="64060">MSETINTAAQFPSFEKPTVQFNERGWGPCELPDTFKDVPYQPFSKNDRLGKICDWTSTSNNDKKYQNKYASSFGTGNQYSYYHEEDETTFHLVDTARVQKPPHQRGRFRNMRGRGGRGRNPRGGLNNHHHHGMTTLNGKNVKARDTRRGMGKKFGHRGPPPKMRESSVAVRADWASIEEMDFPRLIKLSLPNIKDGVDIATCGTLEYYDKTYDRINVKNEKPLQKIDRIVHTVTTTDDPVIRRLSKTVGNVFATDAILATIMCSTRSNYSWDIVIEKVGDKIFMDKRDHTEFDLLTVNESSVEPPTDDDSSCNSPRNLAIEATFINHNFSQQVLKTGDQEAKFKFEEPNPFISEDEDIQVASVGYRYKKWELGSDIVLVARCEHDGVLQTPSGEPQFMSIKALNEWDSKLANGVEWRQKLDTQRGAVLANELRNNACKLAKWTVQAVLAGSDQLKLGYVSRINPRDHSRHVILGTQQFKPHEFATQINLSMDNAWGVLRCIIDLVMKQKDGKYLIMKDPNKPIIRLYDIPDNTFDSDDSDDGEGDDGEGFQQVYNYANNSNKI</sequence>
<reference key="1">
    <citation type="journal article" date="2005" name="Genome Res.">
        <title>Comparative genome sequencing of Drosophila pseudoobscura: chromosomal, gene, and cis-element evolution.</title>
        <authorList>
            <person name="Richards S."/>
            <person name="Liu Y."/>
            <person name="Bettencourt B.R."/>
            <person name="Hradecky P."/>
            <person name="Letovsky S."/>
            <person name="Nielsen R."/>
            <person name="Thornton K."/>
            <person name="Hubisz M.J."/>
            <person name="Chen R."/>
            <person name="Meisel R.P."/>
            <person name="Couronne O."/>
            <person name="Hua S."/>
            <person name="Smith M.A."/>
            <person name="Zhang P."/>
            <person name="Liu J."/>
            <person name="Bussemaker H.J."/>
            <person name="van Batenburg M.F."/>
            <person name="Howells S.L."/>
            <person name="Scherer S.E."/>
            <person name="Sodergren E."/>
            <person name="Matthews B.B."/>
            <person name="Crosby M.A."/>
            <person name="Schroeder A.J."/>
            <person name="Ortiz-Barrientos D."/>
            <person name="Rives C.M."/>
            <person name="Metzker M.L."/>
            <person name="Muzny D.M."/>
            <person name="Scott G."/>
            <person name="Steffen D."/>
            <person name="Wheeler D.A."/>
            <person name="Worley K.C."/>
            <person name="Havlak P."/>
            <person name="Durbin K.J."/>
            <person name="Egan A."/>
            <person name="Gill R."/>
            <person name="Hume J."/>
            <person name="Morgan M.B."/>
            <person name="Miner G."/>
            <person name="Hamilton C."/>
            <person name="Huang Y."/>
            <person name="Waldron L."/>
            <person name="Verduzco D."/>
            <person name="Clerc-Blankenburg K.P."/>
            <person name="Dubchak I."/>
            <person name="Noor M.A.F."/>
            <person name="Anderson W."/>
            <person name="White K.P."/>
            <person name="Clark A.G."/>
            <person name="Schaeffer S.W."/>
            <person name="Gelbart W.M."/>
            <person name="Weinstock G.M."/>
            <person name="Gibbs R.A."/>
        </authorList>
    </citation>
    <scope>NUCLEOTIDE SEQUENCE [LARGE SCALE GENOMIC DNA]</scope>
    <source>
        <strain>MV2-25 / Tucson 14011-0121.94</strain>
    </source>
</reference>
<gene>
    <name evidence="2" type="primary">eIF3d1</name>
    <name type="synonym">eIF-3p66</name>
    <name type="ORF">GA26977</name>
</gene>
<name>EI3D1_DROPS</name>
<keyword id="KW-0963">Cytoplasm</keyword>
<keyword id="KW-0396">Initiation factor</keyword>
<keyword id="KW-0648">Protein biosynthesis</keyword>
<keyword id="KW-1185">Reference proteome</keyword>
<keyword id="KW-0694">RNA-binding</keyword>
<feature type="chain" id="PRO_0000364154" description="Eukaryotic translation initiation factor 3 subunit D-1">
    <location>
        <begin position="1"/>
        <end position="563"/>
    </location>
</feature>
<feature type="region of interest" description="Disordered" evidence="3">
    <location>
        <begin position="98"/>
        <end position="136"/>
    </location>
</feature>
<feature type="region of interest" description="RNA gate" evidence="1">
    <location>
        <begin position="291"/>
        <end position="305"/>
    </location>
</feature>
<feature type="compositionally biased region" description="Basic residues" evidence="3">
    <location>
        <begin position="100"/>
        <end position="120"/>
    </location>
</feature>
<protein>
    <recommendedName>
        <fullName evidence="2">Eukaryotic translation initiation factor 3 subunit D-1</fullName>
        <shortName evidence="2">eIF3d-1</shortName>
    </recommendedName>
    <alternativeName>
        <fullName evidence="2">Eukaryotic translation initiation factor 3 subunit 7-1</fullName>
    </alternativeName>
    <alternativeName>
        <fullName>Eukaryotic translation initiation factor 3 subunit p66</fullName>
    </alternativeName>
</protein>
<dbReference type="EMBL" id="CM000070">
    <property type="protein sequence ID" value="EDY67575.1"/>
    <property type="molecule type" value="Genomic_DNA"/>
</dbReference>
<dbReference type="RefSeq" id="XP_002137017.1">
    <property type="nucleotide sequence ID" value="XM_002136981.3"/>
</dbReference>
<dbReference type="SMR" id="B5DY99"/>
<dbReference type="FunCoup" id="B5DY99">
    <property type="interactions" value="2851"/>
</dbReference>
<dbReference type="STRING" id="46245.B5DY99"/>
<dbReference type="EnsemblMetazoa" id="FBtr0284802">
    <property type="protein sequence ID" value="FBpp0283240"/>
    <property type="gene ID" value="FBgn0248348"/>
</dbReference>
<dbReference type="GeneID" id="6896814"/>
<dbReference type="KEGG" id="dpo:6896814"/>
<dbReference type="CTD" id="42789"/>
<dbReference type="eggNOG" id="KOG2479">
    <property type="taxonomic scope" value="Eukaryota"/>
</dbReference>
<dbReference type="HOGENOM" id="CLU_024521_2_0_1"/>
<dbReference type="InParanoid" id="B5DY99"/>
<dbReference type="OMA" id="FMDKRDN"/>
<dbReference type="ChiTaRS" id="eIF-3p66">
    <property type="organism name" value="fly"/>
</dbReference>
<dbReference type="Proteomes" id="UP000001819">
    <property type="component" value="Chromosome 2"/>
</dbReference>
<dbReference type="Bgee" id="FBgn0248348">
    <property type="expression patterns" value="Expressed in female reproductive system and 3 other cell types or tissues"/>
</dbReference>
<dbReference type="GO" id="GO:0016282">
    <property type="term" value="C:eukaryotic 43S preinitiation complex"/>
    <property type="evidence" value="ECO:0007669"/>
    <property type="project" value="UniProtKB-UniRule"/>
</dbReference>
<dbReference type="GO" id="GO:0033290">
    <property type="term" value="C:eukaryotic 48S preinitiation complex"/>
    <property type="evidence" value="ECO:0007669"/>
    <property type="project" value="UniProtKB-UniRule"/>
</dbReference>
<dbReference type="GO" id="GO:0005852">
    <property type="term" value="C:eukaryotic translation initiation factor 3 complex"/>
    <property type="evidence" value="ECO:0000250"/>
    <property type="project" value="UniProtKB"/>
</dbReference>
<dbReference type="GO" id="GO:0098808">
    <property type="term" value="F:mRNA cap binding"/>
    <property type="evidence" value="ECO:0007669"/>
    <property type="project" value="UniProtKB-UniRule"/>
</dbReference>
<dbReference type="GO" id="GO:0003743">
    <property type="term" value="F:translation initiation factor activity"/>
    <property type="evidence" value="ECO:0000250"/>
    <property type="project" value="UniProtKB"/>
</dbReference>
<dbReference type="GO" id="GO:0002191">
    <property type="term" value="P:cap-dependent translational initiation"/>
    <property type="evidence" value="ECO:0007669"/>
    <property type="project" value="UniProtKB-UniRule"/>
</dbReference>
<dbReference type="GO" id="GO:0001732">
    <property type="term" value="P:formation of cytoplasmic translation initiation complex"/>
    <property type="evidence" value="ECO:0007669"/>
    <property type="project" value="UniProtKB-UniRule"/>
</dbReference>
<dbReference type="GO" id="GO:0006446">
    <property type="term" value="P:regulation of translational initiation"/>
    <property type="evidence" value="ECO:0000250"/>
    <property type="project" value="UniProtKB"/>
</dbReference>
<dbReference type="HAMAP" id="MF_03003">
    <property type="entry name" value="eIF3d"/>
    <property type="match status" value="1"/>
</dbReference>
<dbReference type="InterPro" id="IPR007783">
    <property type="entry name" value="eIF3d"/>
</dbReference>
<dbReference type="PANTHER" id="PTHR12399">
    <property type="entry name" value="EUKARYOTIC TRANSLATION INITIATION FACTOR 3 SUBUNIT 7"/>
    <property type="match status" value="1"/>
</dbReference>
<dbReference type="PANTHER" id="PTHR12399:SF0">
    <property type="entry name" value="EUKARYOTIC TRANSLATION INITIATION FACTOR 3 SUBUNIT D"/>
    <property type="match status" value="1"/>
</dbReference>
<dbReference type="Pfam" id="PF05091">
    <property type="entry name" value="eIF-3_zeta"/>
    <property type="match status" value="1"/>
</dbReference>
<dbReference type="PIRSF" id="PIRSF016281">
    <property type="entry name" value="EIF-3_zeta"/>
    <property type="match status" value="1"/>
</dbReference>
<organism>
    <name type="scientific">Drosophila pseudoobscura pseudoobscura</name>
    <name type="common">Fruit fly</name>
    <dbReference type="NCBI Taxonomy" id="46245"/>
    <lineage>
        <taxon>Eukaryota</taxon>
        <taxon>Metazoa</taxon>
        <taxon>Ecdysozoa</taxon>
        <taxon>Arthropoda</taxon>
        <taxon>Hexapoda</taxon>
        <taxon>Insecta</taxon>
        <taxon>Pterygota</taxon>
        <taxon>Neoptera</taxon>
        <taxon>Endopterygota</taxon>
        <taxon>Diptera</taxon>
        <taxon>Brachycera</taxon>
        <taxon>Muscomorpha</taxon>
        <taxon>Ephydroidea</taxon>
        <taxon>Drosophilidae</taxon>
        <taxon>Drosophila</taxon>
        <taxon>Sophophora</taxon>
    </lineage>
</organism>
<proteinExistence type="inferred from homology"/>
<comment type="function">
    <text evidence="2">mRNA cap-binding component of the eukaryotic translation initiation factor 3 (eIF-3) complex, which is involved in protein synthesis of a specialized repertoire of mRNAs and, together with other initiation factors, stimulates binding of mRNA and methionyl-tRNAi to the 40S ribosome. The eIF-3 complex specifically targets and initiates translation of a subset of mRNAs involved in cell proliferation. In the eIF-3 complex, eif3d specifically recognizes and binds the 7-methylguanosine cap of a subset of mRNAs.</text>
</comment>
<comment type="subunit">
    <text evidence="2">Component of the eukaryotic translation initiation factor 3 (eIF-3) complex. The eIF-3 complex interacts with pix.</text>
</comment>
<comment type="subcellular location">
    <subcellularLocation>
        <location evidence="2">Cytoplasm</location>
    </subcellularLocation>
</comment>
<comment type="domain">
    <text evidence="2">The RNA gate region regulates mRNA cap recognition to prevent promiscuous mRNA-binding before assembly of eif3d into the full eukaryotic translation initiation factor 3 (eIF-3) complex.</text>
</comment>
<comment type="similarity">
    <text evidence="2">Belongs to the eIF-3 subunit D family.</text>
</comment>
<accession>B5DY99</accession>